<gene>
    <name type="primary">sti2</name>
</gene>
<proteinExistence type="evidence at protein level"/>
<accession>P35706</accession>
<reference key="1">
    <citation type="journal article" date="1992" name="J. Biol. Chem.">
        <title>Two novel Streptomyces protein protease inhibitors. Purification, activity, cloning, and expression.</title>
        <authorList>
            <person name="Strickler J.E."/>
            <person name="Berka T.R."/>
            <person name="Gorniak J."/>
            <person name="Fornwald J."/>
            <person name="Keys R."/>
            <person name="Rowland J.J."/>
            <person name="Rosenberg M."/>
            <person name="Taylor D.P."/>
        </authorList>
    </citation>
    <scope>NUCLEOTIDE SEQUENCE [GENOMIC DNA]</scope>
    <scope>PARTIAL PROTEIN SEQUENCE</scope>
</reference>
<reference key="2">
    <citation type="journal article" date="1993" name="Biosci. Biotechnol. Biochem.">
        <title>High frequency of SSI-like protease inhibitors among Streptomyces.</title>
        <authorList>
            <person name="Taguchi S."/>
            <person name="Kikuchi H."/>
            <person name="Kojima S."/>
            <person name="Kumagai I."/>
            <person name="Nakase T."/>
            <person name="Miura K."/>
            <person name="Momose H."/>
        </authorList>
    </citation>
    <scope>PROTEIN SEQUENCE OF 35-71</scope>
    <source>
        <strain>4395</strain>
    </source>
</reference>
<organism>
    <name type="scientific">Streptomyces longisporus</name>
    <dbReference type="NCBI Taxonomy" id="1948"/>
    <lineage>
        <taxon>Bacteria</taxon>
        <taxon>Bacillati</taxon>
        <taxon>Actinomycetota</taxon>
        <taxon>Actinomycetes</taxon>
        <taxon>Kitasatosporales</taxon>
        <taxon>Streptomycetaceae</taxon>
        <taxon>Streptomyces</taxon>
    </lineage>
</organism>
<keyword id="KW-0903">Direct protein sequencing</keyword>
<keyword id="KW-1015">Disulfide bond</keyword>
<keyword id="KW-0646">Protease inhibitor</keyword>
<keyword id="KW-0964">Secreted</keyword>
<keyword id="KW-0722">Serine protease inhibitor</keyword>
<keyword id="KW-0732">Signal</keyword>
<protein>
    <recommendedName>
        <fullName>Trypsin inhibitor STI2</fullName>
    </recommendedName>
</protein>
<name>SSI2_STRLO</name>
<comment type="function">
    <text>Inhibitory activity against trypsin.</text>
</comment>
<comment type="subunit">
    <text evidence="1">Homodimer.</text>
</comment>
<comment type="subcellular location">
    <subcellularLocation>
        <location>Secreted</location>
    </subcellularLocation>
</comment>
<comment type="similarity">
    <text evidence="3">Belongs to the protease inhibitor I16 (SSI) family.</text>
</comment>
<evidence type="ECO:0000250" key="1"/>
<evidence type="ECO:0000269" key="2">
    <source>
    </source>
</evidence>
<evidence type="ECO:0000305" key="3"/>
<dbReference type="EMBL" id="M80577">
    <property type="protein sequence ID" value="AAA26802.1"/>
    <property type="molecule type" value="Genomic_DNA"/>
</dbReference>
<dbReference type="PIR" id="A42585">
    <property type="entry name" value="A42585"/>
</dbReference>
<dbReference type="SMR" id="P35706"/>
<dbReference type="MEROPS" id="I16.006"/>
<dbReference type="GO" id="GO:0005576">
    <property type="term" value="C:extracellular region"/>
    <property type="evidence" value="ECO:0007669"/>
    <property type="project" value="UniProtKB-SubCell"/>
</dbReference>
<dbReference type="GO" id="GO:0004867">
    <property type="term" value="F:serine-type endopeptidase inhibitor activity"/>
    <property type="evidence" value="ECO:0007669"/>
    <property type="project" value="UniProtKB-UniRule"/>
</dbReference>
<dbReference type="Gene3D" id="3.30.350.10">
    <property type="entry name" value="Subtilisin inhibitor-like"/>
    <property type="match status" value="1"/>
</dbReference>
<dbReference type="HAMAP" id="MF_00778">
    <property type="entry name" value="SSI"/>
    <property type="match status" value="1"/>
</dbReference>
<dbReference type="InterPro" id="IPR000691">
    <property type="entry name" value="Prot_inh_I16_SSI"/>
</dbReference>
<dbReference type="InterPro" id="IPR020054">
    <property type="entry name" value="Prot_inh_SSI_I16_CS"/>
</dbReference>
<dbReference type="InterPro" id="IPR023549">
    <property type="entry name" value="Subtilisin_inhibitor"/>
</dbReference>
<dbReference type="InterPro" id="IPR036819">
    <property type="entry name" value="Subtilisin_inhibitor-like_sf"/>
</dbReference>
<dbReference type="NCBIfam" id="NF009715">
    <property type="entry name" value="PRK13244.1-1"/>
    <property type="match status" value="1"/>
</dbReference>
<dbReference type="Pfam" id="PF00720">
    <property type="entry name" value="SSI"/>
    <property type="match status" value="1"/>
</dbReference>
<dbReference type="PRINTS" id="PR00294">
    <property type="entry name" value="SSBTLNINHBTR"/>
</dbReference>
<dbReference type="SUPFAM" id="SSF55399">
    <property type="entry name" value="Subtilisin inhibitor"/>
    <property type="match status" value="1"/>
</dbReference>
<dbReference type="PROSITE" id="PS00999">
    <property type="entry name" value="SSI"/>
    <property type="match status" value="1"/>
</dbReference>
<sequence>MRNTARWAATLALTATAVCGPLTGAALATPAAAPASLYAPSALVLTVGHGTSAAAASPLRAVTLNCAPTASGTHPAPALACADLRGVGGDIDALKARDGVICNKLYDPVVVTVDGVWQGKRVSYERTFGNECVKNSYGTSLFAF</sequence>
<feature type="signal peptide" evidence="2">
    <location>
        <begin position="1"/>
        <end position="34"/>
    </location>
</feature>
<feature type="chain" id="PRO_0000033275" description="Trypsin inhibitor STI2">
    <location>
        <begin position="35"/>
        <end position="144"/>
    </location>
</feature>
<feature type="site" description="Reactive bond" evidence="1">
    <location>
        <begin position="104"/>
        <end position="105"/>
    </location>
</feature>
<feature type="disulfide bond" evidence="1">
    <location>
        <begin position="66"/>
        <end position="81"/>
    </location>
</feature>
<feature type="disulfide bond" evidence="1">
    <location>
        <begin position="102"/>
        <end position="132"/>
    </location>
</feature>